<sequence length="308" mass="36586">MMKSTNRSSLILSSNKFVCNNITNGKPMNIPVKNHNKYSSEPVSRSWGQIYSNNIDRYNLHNSKLSKKKYNKSPYYSDTYYVNYDNNDFNNRPYDAIKNCKSAGIIPYTFKNGELYFLFQRAEDPQRKKDSGWNDFGGKQLNSSETTADIAAREFSEETSCLFYLLEKLSIESNNNNNNNIKFKDLYDLLKNNDDLFYSRETIVNLKKLIIESKKFYSDKITEYVLPIFLSSKETYISYFVRVKYIPESDLPKAEDFHIPYEDRYLRECRWFSLDDLMNLNEKDFHKRLQITRIQQRIAKYYEKGLFS</sequence>
<gene>
    <name type="ordered locus">MIMI_L534</name>
</gene>
<accession>Q5UQA2</accession>
<organismHost>
    <name type="scientific">Acanthamoeba polyphaga</name>
    <name type="common">Amoeba</name>
    <dbReference type="NCBI Taxonomy" id="5757"/>
</organismHost>
<organism>
    <name type="scientific">Acanthamoeba polyphaga mimivirus</name>
    <name type="common">APMV</name>
    <dbReference type="NCBI Taxonomy" id="212035"/>
    <lineage>
        <taxon>Viruses</taxon>
        <taxon>Varidnaviria</taxon>
        <taxon>Bamfordvirae</taxon>
        <taxon>Nucleocytoviricota</taxon>
        <taxon>Megaviricetes</taxon>
        <taxon>Imitervirales</taxon>
        <taxon>Mimiviridae</taxon>
        <taxon>Megamimivirinae</taxon>
        <taxon>Mimivirus</taxon>
        <taxon>Mimivirus bradfordmassiliense</taxon>
    </lineage>
</organism>
<dbReference type="EMBL" id="AY653733">
    <property type="protein sequence ID" value="AAV50798.1"/>
    <property type="molecule type" value="Genomic_DNA"/>
</dbReference>
<dbReference type="Proteomes" id="UP000001134">
    <property type="component" value="Genome"/>
</dbReference>
<dbReference type="Gene3D" id="3.90.79.10">
    <property type="entry name" value="Nucleoside Triphosphate Pyrophosphohydrolase"/>
    <property type="match status" value="1"/>
</dbReference>
<dbReference type="InterPro" id="IPR015797">
    <property type="entry name" value="NUDIX_hydrolase-like_dom_sf"/>
</dbReference>
<dbReference type="SUPFAM" id="SSF55811">
    <property type="entry name" value="Nudix"/>
    <property type="match status" value="1"/>
</dbReference>
<protein>
    <recommendedName>
        <fullName>Uncharacterized protein L534</fullName>
    </recommendedName>
</protein>
<feature type="chain" id="PRO_0000253277" description="Uncharacterized protein L534">
    <location>
        <begin position="1"/>
        <end position="308"/>
    </location>
</feature>
<name>YL534_MIMIV</name>
<reference key="1">
    <citation type="journal article" date="2004" name="Science">
        <title>The 1.2-megabase genome sequence of Mimivirus.</title>
        <authorList>
            <person name="Raoult D."/>
            <person name="Audic S."/>
            <person name="Robert C."/>
            <person name="Abergel C."/>
            <person name="Renesto P."/>
            <person name="Ogata H."/>
            <person name="La Scola B."/>
            <person name="Susan M."/>
            <person name="Claverie J.-M."/>
        </authorList>
    </citation>
    <scope>NUCLEOTIDE SEQUENCE [LARGE SCALE GENOMIC DNA]</scope>
    <source>
        <strain>Rowbotham-Bradford</strain>
    </source>
</reference>
<proteinExistence type="predicted"/>
<keyword id="KW-1185">Reference proteome</keyword>